<sequence length="328" mass="37723">MIFSILEHILTHISFSVVSIVLTIYFLTFLVNLDEIIGFFDSSDKGIVITFFGITGLLFTRWIYSGHFPLSNLYESLIFLSWAFSIIHMISYFNKKQKNHLNAITAPSAIFIQGFATSGLLNKIPESAILVPALQSQWLMMHVSMMILGYGALLCGSLLSIALLVITFRKTGPTFWNKNIKKNNLLTEFFYFDVLYYINERNSILLQQNSNFSFSRNYYRYQLIEQLDYWSFRIISLGFIFLTVGILSGAVWANETWGSYWNWDPKETWAFITWTIFAIFLHIKTNRNVRGINSAIVASTGFLLIWICYFGVNLLGIGLHSYGSFTSN</sequence>
<reference key="1">
    <citation type="submission" date="2007-03" db="EMBL/GenBank/DDBJ databases">
        <title>Sequencing analysis of Arabis hirsuta chloroplast DNA.</title>
        <authorList>
            <person name="Hosouchi T."/>
            <person name="Tsuruoka H."/>
            <person name="Kotani H."/>
        </authorList>
    </citation>
    <scope>NUCLEOTIDE SEQUENCE [LARGE SCALE GENOMIC DNA]</scope>
</reference>
<gene>
    <name evidence="1" type="primary">ccsA</name>
</gene>
<feature type="chain" id="PRO_0000353731" description="Cytochrome c biogenesis protein CcsA">
    <location>
        <begin position="1"/>
        <end position="328"/>
    </location>
</feature>
<feature type="transmembrane region" description="Helical" evidence="1">
    <location>
        <begin position="13"/>
        <end position="33"/>
    </location>
</feature>
<feature type="transmembrane region" description="Helical" evidence="1">
    <location>
        <begin position="46"/>
        <end position="66"/>
    </location>
</feature>
<feature type="transmembrane region" description="Helical" evidence="1">
    <location>
        <begin position="73"/>
        <end position="93"/>
    </location>
</feature>
<feature type="transmembrane region" description="Helical" evidence="1">
    <location>
        <begin position="101"/>
        <end position="121"/>
    </location>
</feature>
<feature type="transmembrane region" description="Helical" evidence="1">
    <location>
        <begin position="146"/>
        <end position="166"/>
    </location>
</feature>
<feature type="transmembrane region" description="Helical" evidence="1">
    <location>
        <begin position="234"/>
        <end position="254"/>
    </location>
</feature>
<feature type="transmembrane region" description="Helical" evidence="1">
    <location>
        <begin position="263"/>
        <end position="283"/>
    </location>
</feature>
<feature type="transmembrane region" description="Helical" evidence="1">
    <location>
        <begin position="295"/>
        <end position="315"/>
    </location>
</feature>
<organism>
    <name type="scientific">Arabis hirsuta</name>
    <name type="common">Hairy rock-cress</name>
    <name type="synonym">Turritis hirsuta</name>
    <dbReference type="NCBI Taxonomy" id="78191"/>
    <lineage>
        <taxon>Eukaryota</taxon>
        <taxon>Viridiplantae</taxon>
        <taxon>Streptophyta</taxon>
        <taxon>Embryophyta</taxon>
        <taxon>Tracheophyta</taxon>
        <taxon>Spermatophyta</taxon>
        <taxon>Magnoliopsida</taxon>
        <taxon>eudicotyledons</taxon>
        <taxon>Gunneridae</taxon>
        <taxon>Pentapetalae</taxon>
        <taxon>rosids</taxon>
        <taxon>malvids</taxon>
        <taxon>Brassicales</taxon>
        <taxon>Brassicaceae</taxon>
        <taxon>Arabideae</taxon>
        <taxon>Arabis</taxon>
    </lineage>
</organism>
<keyword id="KW-0150">Chloroplast</keyword>
<keyword id="KW-0201">Cytochrome c-type biogenesis</keyword>
<keyword id="KW-0472">Membrane</keyword>
<keyword id="KW-0934">Plastid</keyword>
<keyword id="KW-0793">Thylakoid</keyword>
<keyword id="KW-0812">Transmembrane</keyword>
<keyword id="KW-1133">Transmembrane helix</keyword>
<protein>
    <recommendedName>
        <fullName evidence="1">Cytochrome c biogenesis protein CcsA</fullName>
    </recommendedName>
</protein>
<evidence type="ECO:0000255" key="1">
    <source>
        <dbReference type="HAMAP-Rule" id="MF_01391"/>
    </source>
</evidence>
<dbReference type="EMBL" id="AP009369">
    <property type="protein sequence ID" value="BAF50074.1"/>
    <property type="molecule type" value="Genomic_DNA"/>
</dbReference>
<dbReference type="RefSeq" id="YP_001123249.1">
    <property type="nucleotide sequence ID" value="NC_009268.1"/>
</dbReference>
<dbReference type="SMR" id="A4QK69"/>
<dbReference type="GeneID" id="4962536"/>
<dbReference type="GO" id="GO:0009535">
    <property type="term" value="C:chloroplast thylakoid membrane"/>
    <property type="evidence" value="ECO:0007669"/>
    <property type="project" value="UniProtKB-SubCell"/>
</dbReference>
<dbReference type="GO" id="GO:0005886">
    <property type="term" value="C:plasma membrane"/>
    <property type="evidence" value="ECO:0007669"/>
    <property type="project" value="TreeGrafter"/>
</dbReference>
<dbReference type="GO" id="GO:0020037">
    <property type="term" value="F:heme binding"/>
    <property type="evidence" value="ECO:0007669"/>
    <property type="project" value="InterPro"/>
</dbReference>
<dbReference type="GO" id="GO:0017004">
    <property type="term" value="P:cytochrome complex assembly"/>
    <property type="evidence" value="ECO:0007669"/>
    <property type="project" value="UniProtKB-UniRule"/>
</dbReference>
<dbReference type="HAMAP" id="MF_01391">
    <property type="entry name" value="CytC_CcsA"/>
    <property type="match status" value="1"/>
</dbReference>
<dbReference type="InterPro" id="IPR002541">
    <property type="entry name" value="Cyt_c_assembly"/>
</dbReference>
<dbReference type="InterPro" id="IPR017562">
    <property type="entry name" value="Cyt_c_biogenesis_CcsA"/>
</dbReference>
<dbReference type="InterPro" id="IPR045062">
    <property type="entry name" value="Cyt_c_biogenesis_CcsA/CcmC"/>
</dbReference>
<dbReference type="NCBIfam" id="TIGR03144">
    <property type="entry name" value="cytochr_II_ccsB"/>
    <property type="match status" value="1"/>
</dbReference>
<dbReference type="PANTHER" id="PTHR30071:SF1">
    <property type="entry name" value="CYTOCHROME B_B6 PROTEIN-RELATED"/>
    <property type="match status" value="1"/>
</dbReference>
<dbReference type="PANTHER" id="PTHR30071">
    <property type="entry name" value="HEME EXPORTER PROTEIN C"/>
    <property type="match status" value="1"/>
</dbReference>
<dbReference type="Pfam" id="PF01578">
    <property type="entry name" value="Cytochrom_C_asm"/>
    <property type="match status" value="1"/>
</dbReference>
<comment type="function">
    <text evidence="1">Required during biogenesis of c-type cytochromes (cytochrome c6 and cytochrome f) at the step of heme attachment.</text>
</comment>
<comment type="subunit">
    <text evidence="1">May interact with Ccs1.</text>
</comment>
<comment type="subcellular location">
    <subcellularLocation>
        <location evidence="1">Plastid</location>
        <location evidence="1">Chloroplast thylakoid membrane</location>
        <topology evidence="1">Multi-pass membrane protein</topology>
    </subcellularLocation>
</comment>
<comment type="similarity">
    <text evidence="1">Belongs to the CcmF/CycK/Ccl1/NrfE/CcsA family.</text>
</comment>
<geneLocation type="chloroplast"/>
<proteinExistence type="inferred from homology"/>
<accession>A4QK69</accession>
<name>CCSA_ARAHI</name>